<feature type="chain" id="PRO_0000196185" description="Lactose permease">
    <location>
        <begin position="1"/>
        <end position="416"/>
    </location>
</feature>
<feature type="topological domain" description="Cytoplasmic" evidence="3">
    <location>
        <begin position="1"/>
        <end position="13"/>
    </location>
</feature>
<feature type="transmembrane region" description="Helical" evidence="2">
    <location>
        <begin position="14"/>
        <end position="34"/>
    </location>
</feature>
<feature type="topological domain" description="Periplasmic" evidence="3">
    <location>
        <begin position="35"/>
        <end position="50"/>
    </location>
</feature>
<feature type="transmembrane region" description="Helical" evidence="2">
    <location>
        <begin position="51"/>
        <end position="71"/>
    </location>
</feature>
<feature type="topological domain" description="Cytoplasmic" evidence="3">
    <location>
        <begin position="72"/>
        <end position="80"/>
    </location>
</feature>
<feature type="transmembrane region" description="Helical" evidence="2">
    <location>
        <begin position="81"/>
        <end position="101"/>
    </location>
</feature>
<feature type="topological domain" description="Periplasmic" evidence="3">
    <location>
        <position position="102"/>
    </location>
</feature>
<feature type="transmembrane region" description="Helical" evidence="2">
    <location>
        <begin position="103"/>
        <end position="123"/>
    </location>
</feature>
<feature type="topological domain" description="Cytoplasmic" evidence="3">
    <location>
        <begin position="124"/>
        <end position="149"/>
    </location>
</feature>
<feature type="transmembrane region" description="Helical" evidence="2">
    <location>
        <begin position="150"/>
        <end position="170"/>
    </location>
</feature>
<feature type="transmembrane region" description="Helical" evidence="2">
    <location>
        <begin position="171"/>
        <end position="191"/>
    </location>
</feature>
<feature type="topological domain" description="Cytoplasmic" evidence="3">
    <location>
        <begin position="192"/>
        <end position="223"/>
    </location>
</feature>
<feature type="transmembrane region" description="Helical" evidence="2">
    <location>
        <begin position="224"/>
        <end position="244"/>
    </location>
</feature>
<feature type="topological domain" description="Periplasmic" evidence="3">
    <location>
        <begin position="245"/>
        <end position="267"/>
    </location>
</feature>
<feature type="transmembrane region" description="Helical" evidence="2">
    <location>
        <begin position="268"/>
        <end position="288"/>
    </location>
</feature>
<feature type="topological domain" description="Cytoplasmic" evidence="3">
    <location>
        <begin position="289"/>
        <end position="295"/>
    </location>
</feature>
<feature type="transmembrane region" description="Helical" evidence="2">
    <location>
        <begin position="296"/>
        <end position="316"/>
    </location>
</feature>
<feature type="transmembrane region" description="Helical" evidence="2">
    <location>
        <begin position="317"/>
        <end position="337"/>
    </location>
</feature>
<feature type="topological domain" description="Cytoplasmic" evidence="3">
    <location>
        <begin position="338"/>
        <end position="353"/>
    </location>
</feature>
<feature type="transmembrane region" description="Helical" evidence="2">
    <location>
        <begin position="354"/>
        <end position="374"/>
    </location>
</feature>
<feature type="topological domain" description="Periplasmic" evidence="3">
    <location>
        <begin position="375"/>
        <end position="384"/>
    </location>
</feature>
<feature type="transmembrane region" description="Helical" evidence="2">
    <location>
        <begin position="385"/>
        <end position="405"/>
    </location>
</feature>
<feature type="topological domain" description="Cytoplasmic" evidence="3">
    <location>
        <begin position="406"/>
        <end position="416"/>
    </location>
</feature>
<feature type="site" description="Substrate binding" evidence="1">
    <location>
        <position position="131"/>
    </location>
</feature>
<feature type="site" description="Substrate binding" evidence="1">
    <location>
        <position position="149"/>
    </location>
</feature>
<feature type="site" description="Substrate binding and proton translocation" evidence="1">
    <location>
        <position position="274"/>
    </location>
</feature>
<feature type="site" description="Proton translocation" evidence="1">
    <location>
        <position position="307"/>
    </location>
</feature>
<feature type="site" description="Proton translocation" evidence="1">
    <location>
        <position position="327"/>
    </location>
</feature>
<feature type="site" description="Proton translocation" evidence="1">
    <location>
        <position position="330"/>
    </location>
</feature>
<reference key="1">
    <citation type="journal article" date="1988" name="Biochim. Biophys. Acta">
        <title>The lactose carrier of Klebsiella pneumoniae M5a1; the physiology of transport and the nucleotide sequence of the lacY gene.</title>
        <authorList>
            <person name="McMorrow I."/>
            <person name="Chin D.T."/>
            <person name="Fiebig K."/>
            <person name="Pierce J.L."/>
            <person name="Wilson D.M."/>
            <person name="Reeve E.C.R."/>
            <person name="Wilson T.H."/>
        </authorList>
    </citation>
    <scope>NUCLEOTIDE SEQUENCE [GENOMIC DNA]</scope>
    <source>
        <strain>M5a1</strain>
    </source>
</reference>
<comment type="function">
    <text evidence="1">Responsible for transport of beta-galactosides into the cell, with the concomitant import of a proton (symport system).</text>
</comment>
<comment type="catalytic activity">
    <reaction evidence="1">
        <text>lactose(in) + H(+)(in) = lactose(out) + H(+)(out)</text>
        <dbReference type="Rhea" id="RHEA:28867"/>
        <dbReference type="ChEBI" id="CHEBI:15378"/>
        <dbReference type="ChEBI" id="CHEBI:17716"/>
    </reaction>
    <physiologicalReaction direction="right-to-left" evidence="1">
        <dbReference type="Rhea" id="RHEA:28869"/>
    </physiologicalReaction>
</comment>
<comment type="subcellular location">
    <subcellularLocation>
        <location evidence="1">Cell inner membrane</location>
        <topology evidence="1">Multi-pass membrane protein</topology>
    </subcellularLocation>
</comment>
<comment type="similarity">
    <text evidence="3">Belongs to the major facilitator superfamily. Oligosaccharide:H(+) symporter (OHS) (TC 2.A.1.5) family.</text>
</comment>
<gene>
    <name type="primary">lacY</name>
</gene>
<accession>P18817</accession>
<dbReference type="EMBL" id="X14154">
    <property type="protein sequence ID" value="CAA32366.1"/>
    <property type="molecule type" value="Genomic_DNA"/>
</dbReference>
<dbReference type="SMR" id="P18817"/>
<dbReference type="STRING" id="571.AB185_20410"/>
<dbReference type="eggNOG" id="COG2223">
    <property type="taxonomic scope" value="Bacteria"/>
</dbReference>
<dbReference type="GO" id="GO:0005886">
    <property type="term" value="C:plasma membrane"/>
    <property type="evidence" value="ECO:0007669"/>
    <property type="project" value="UniProtKB-SubCell"/>
</dbReference>
<dbReference type="GO" id="GO:0030395">
    <property type="term" value="F:lactose binding"/>
    <property type="evidence" value="ECO:0007669"/>
    <property type="project" value="TreeGrafter"/>
</dbReference>
<dbReference type="GO" id="GO:0015528">
    <property type="term" value="F:lactose:proton symporter activity"/>
    <property type="evidence" value="ECO:0007669"/>
    <property type="project" value="TreeGrafter"/>
</dbReference>
<dbReference type="CDD" id="cd06172">
    <property type="entry name" value="MFS_LacY"/>
    <property type="match status" value="1"/>
</dbReference>
<dbReference type="Gene3D" id="1.20.1250.20">
    <property type="entry name" value="MFS general substrate transporter like domains"/>
    <property type="match status" value="2"/>
</dbReference>
<dbReference type="InterPro" id="IPR000576">
    <property type="entry name" value="LacY/RafB_perm_fam"/>
</dbReference>
<dbReference type="InterPro" id="IPR018457">
    <property type="entry name" value="LacY/RafB_perm_fam_CS"/>
</dbReference>
<dbReference type="InterPro" id="IPR020846">
    <property type="entry name" value="MFS_dom"/>
</dbReference>
<dbReference type="InterPro" id="IPR036259">
    <property type="entry name" value="MFS_trans_sf"/>
</dbReference>
<dbReference type="NCBIfam" id="TIGR00882">
    <property type="entry name" value="2A0105"/>
    <property type="match status" value="1"/>
</dbReference>
<dbReference type="NCBIfam" id="NF007077">
    <property type="entry name" value="PRK09528.1"/>
    <property type="match status" value="1"/>
</dbReference>
<dbReference type="PANTHER" id="PTHR23522:SF10">
    <property type="entry name" value="3-PHENYLPROPIONIC ACID TRANSPORTER-RELATED"/>
    <property type="match status" value="1"/>
</dbReference>
<dbReference type="PANTHER" id="PTHR23522">
    <property type="entry name" value="BLL5896 PROTEIN"/>
    <property type="match status" value="1"/>
</dbReference>
<dbReference type="Pfam" id="PF01306">
    <property type="entry name" value="LacY_symp"/>
    <property type="match status" value="1"/>
</dbReference>
<dbReference type="PRINTS" id="PR00174">
    <property type="entry name" value="LACYSMPORT"/>
</dbReference>
<dbReference type="SUPFAM" id="SSF103473">
    <property type="entry name" value="MFS general substrate transporter"/>
    <property type="match status" value="1"/>
</dbReference>
<dbReference type="PROSITE" id="PS00896">
    <property type="entry name" value="LACY_1"/>
    <property type="match status" value="1"/>
</dbReference>
<dbReference type="PROSITE" id="PS00897">
    <property type="entry name" value="LACY_2"/>
    <property type="match status" value="1"/>
</dbReference>
<dbReference type="PROSITE" id="PS50850">
    <property type="entry name" value="MFS"/>
    <property type="match status" value="1"/>
</dbReference>
<protein>
    <recommendedName>
        <fullName>Lactose permease</fullName>
    </recommendedName>
    <alternativeName>
        <fullName>Lactose-proton symport</fullName>
    </alternativeName>
</protein>
<evidence type="ECO:0000250" key="1">
    <source>
        <dbReference type="UniProtKB" id="P02920"/>
    </source>
</evidence>
<evidence type="ECO:0000255" key="2"/>
<evidence type="ECO:0000305" key="3"/>
<name>LACY_KLEOX</name>
<keyword id="KW-0997">Cell inner membrane</keyword>
<keyword id="KW-1003">Cell membrane</keyword>
<keyword id="KW-0472">Membrane</keyword>
<keyword id="KW-0762">Sugar transport</keyword>
<keyword id="KW-0769">Symport</keyword>
<keyword id="KW-0812">Transmembrane</keyword>
<keyword id="KW-1133">Transmembrane helix</keyword>
<keyword id="KW-0813">Transport</keyword>
<proteinExistence type="inferred from homology"/>
<organism>
    <name type="scientific">Klebsiella oxytoca</name>
    <dbReference type="NCBI Taxonomy" id="571"/>
    <lineage>
        <taxon>Bacteria</taxon>
        <taxon>Pseudomonadati</taxon>
        <taxon>Pseudomonadota</taxon>
        <taxon>Gammaproteobacteria</taxon>
        <taxon>Enterobacterales</taxon>
        <taxon>Enterobacteriaceae</taxon>
        <taxon>Klebsiella/Raoultella group</taxon>
        <taxon>Klebsiella</taxon>
    </lineage>
</organism>
<sequence length="416" mass="46221">MKLSELAPRERHNFIYFMLFFFFYYFIMSAYFPFFPVWLAEVNHLTKTETGIVFSCISLFAIIFQPVFGLISDKLGLRKHLLWTITILLILFAPFFIFVFSPLLQMNIMAGALVGGVYLGIVFSSRSGAVEAYIERVSRANRFEYGKVRVSGCVGWALCASITGILFSIDPNITFWIASGFALILGVLLWVSKPESSNSAEVIDALGANRQAFSMRTAAELFRMPRFWGFIIYVVGVASVYDVFDQQFANFFKGFFSSPQRGTEVFGFVTTGGELLNALIMFCAPAIINRIGAKNALLIAGLIMSVRILGSSFATSAVEVIILKMLHMFEIPFLLVGTFKYISSAFKGKLSATLFLIGFNLSKQLSSVVLSAWVGRMYDTVGFHQAYLILGCITLSFTVISLFTLKGSKTLLPATA</sequence>